<dbReference type="EC" id="3.5.3.1" evidence="1"/>
<dbReference type="EMBL" id="AE014292">
    <property type="protein sequence ID" value="AAN34072.1"/>
    <property type="molecule type" value="Genomic_DNA"/>
</dbReference>
<dbReference type="EMBL" id="CP002998">
    <property type="protein sequence ID" value="AEM20348.1"/>
    <property type="molecule type" value="Genomic_DNA"/>
</dbReference>
<dbReference type="RefSeq" id="WP_002965747.1">
    <property type="nucleotide sequence ID" value="NZ_KN046805.1"/>
</dbReference>
<dbReference type="SMR" id="P0A2Y0"/>
<dbReference type="GeneID" id="93015723"/>
<dbReference type="KEGG" id="bms:BRA0900"/>
<dbReference type="KEGG" id="bsi:BS1330_II0892"/>
<dbReference type="PATRIC" id="fig|204722.21.peg.403"/>
<dbReference type="HOGENOM" id="CLU_039478_6_2_5"/>
<dbReference type="PhylomeDB" id="P0A2Y0"/>
<dbReference type="UniPathway" id="UPA00158">
    <property type="reaction ID" value="UER00270"/>
</dbReference>
<dbReference type="Proteomes" id="UP000007104">
    <property type="component" value="Chromosome II"/>
</dbReference>
<dbReference type="GO" id="GO:0005737">
    <property type="term" value="C:cytoplasm"/>
    <property type="evidence" value="ECO:0007669"/>
    <property type="project" value="TreeGrafter"/>
</dbReference>
<dbReference type="GO" id="GO:0004053">
    <property type="term" value="F:arginase activity"/>
    <property type="evidence" value="ECO:0007669"/>
    <property type="project" value="UniProtKB-EC"/>
</dbReference>
<dbReference type="GO" id="GO:0030145">
    <property type="term" value="F:manganese ion binding"/>
    <property type="evidence" value="ECO:0007669"/>
    <property type="project" value="TreeGrafter"/>
</dbReference>
<dbReference type="GO" id="GO:0019547">
    <property type="term" value="P:arginine catabolic process to ornithine"/>
    <property type="evidence" value="ECO:0007669"/>
    <property type="project" value="TreeGrafter"/>
</dbReference>
<dbReference type="GO" id="GO:0000050">
    <property type="term" value="P:urea cycle"/>
    <property type="evidence" value="ECO:0007669"/>
    <property type="project" value="UniProtKB-UniPathway"/>
</dbReference>
<dbReference type="CDD" id="cd09989">
    <property type="entry name" value="Arginase"/>
    <property type="match status" value="1"/>
</dbReference>
<dbReference type="FunFam" id="3.40.800.10:FF:000012">
    <property type="entry name" value="Arginase"/>
    <property type="match status" value="1"/>
</dbReference>
<dbReference type="Gene3D" id="3.40.800.10">
    <property type="entry name" value="Ureohydrolase domain"/>
    <property type="match status" value="1"/>
</dbReference>
<dbReference type="InterPro" id="IPR014033">
    <property type="entry name" value="Arginase"/>
</dbReference>
<dbReference type="InterPro" id="IPR006035">
    <property type="entry name" value="Ureohydrolase"/>
</dbReference>
<dbReference type="InterPro" id="IPR023696">
    <property type="entry name" value="Ureohydrolase_dom_sf"/>
</dbReference>
<dbReference type="InterPro" id="IPR020855">
    <property type="entry name" value="Ureohydrolase_Mn_BS"/>
</dbReference>
<dbReference type="NCBIfam" id="TIGR01229">
    <property type="entry name" value="rocF_arginase"/>
    <property type="match status" value="1"/>
</dbReference>
<dbReference type="PANTHER" id="PTHR43782">
    <property type="entry name" value="ARGINASE"/>
    <property type="match status" value="1"/>
</dbReference>
<dbReference type="PANTHER" id="PTHR43782:SF3">
    <property type="entry name" value="ARGINASE"/>
    <property type="match status" value="1"/>
</dbReference>
<dbReference type="Pfam" id="PF00491">
    <property type="entry name" value="Arginase"/>
    <property type="match status" value="1"/>
</dbReference>
<dbReference type="PIRSF" id="PIRSF036979">
    <property type="entry name" value="Arginase"/>
    <property type="match status" value="1"/>
</dbReference>
<dbReference type="PRINTS" id="PR00116">
    <property type="entry name" value="ARGINASE"/>
</dbReference>
<dbReference type="SUPFAM" id="SSF52768">
    <property type="entry name" value="Arginase/deacetylase"/>
    <property type="match status" value="1"/>
</dbReference>
<dbReference type="PROSITE" id="PS01053">
    <property type="entry name" value="ARGINASE_1"/>
    <property type="match status" value="1"/>
</dbReference>
<dbReference type="PROSITE" id="PS51409">
    <property type="entry name" value="ARGINASE_2"/>
    <property type="match status" value="1"/>
</dbReference>
<protein>
    <recommendedName>
        <fullName>Arginase</fullName>
        <ecNumber evidence="1">3.5.3.1</ecNumber>
    </recommendedName>
</protein>
<name>ARGI_BRUSU</name>
<evidence type="ECO:0000250" key="1">
    <source>
        <dbReference type="UniProtKB" id="P05089"/>
    </source>
</evidence>
<evidence type="ECO:0000250" key="2">
    <source>
        <dbReference type="UniProtKB" id="P53608"/>
    </source>
</evidence>
<evidence type="ECO:0000255" key="3">
    <source>
        <dbReference type="PROSITE-ProRule" id="PRU00742"/>
    </source>
</evidence>
<sequence>MHCKILGLPVQEGTGRKGCNMGPDSYRAAGIADAIRELGHECTDLGNLAPAAQRPLQHPNHAIKALPYAVAWIEAISEAAYRESAEGFPIFLGGDHLLAAGTVPGIARRAAEKGRKQFVLWLDAHTDFHTLETTTSGNLHGTPVAYYTGQKGFEGYFPKLAAPIDPHNVCMLGIRSVDPAEREAVKKTEVIVYDMRLIDEHGVAALLRRFLERVKAEDGLLHVSLDVDFLDPSIAPAVGTTVPGGATFREAHLIMEMLHDSGLVTSLDLVELNPFLDERGRTAAVMVDLMASLLGRSVMDRPTISY</sequence>
<gene>
    <name type="primary">arcB</name>
    <name type="synonym">rocF</name>
    <name type="ordered locus">BRA0900</name>
    <name type="ordered locus">BS1330_II0892</name>
</gene>
<accession>P0A2Y0</accession>
<accession>G0KDR0</accession>
<accession>Q59174</accession>
<proteinExistence type="inferred from homology"/>
<keyword id="KW-0056">Arginine metabolism</keyword>
<keyword id="KW-0378">Hydrolase</keyword>
<keyword id="KW-0464">Manganese</keyword>
<keyword id="KW-0479">Metal-binding</keyword>
<comment type="catalytic activity">
    <reaction evidence="1">
        <text>L-arginine + H2O = urea + L-ornithine</text>
        <dbReference type="Rhea" id="RHEA:20569"/>
        <dbReference type="ChEBI" id="CHEBI:15377"/>
        <dbReference type="ChEBI" id="CHEBI:16199"/>
        <dbReference type="ChEBI" id="CHEBI:32682"/>
        <dbReference type="ChEBI" id="CHEBI:46911"/>
        <dbReference type="EC" id="3.5.3.1"/>
    </reaction>
</comment>
<comment type="cofactor">
    <cofactor evidence="3">
        <name>Mn(2+)</name>
        <dbReference type="ChEBI" id="CHEBI:29035"/>
    </cofactor>
    <text evidence="3">Binds 2 manganese ions per subunit.</text>
</comment>
<comment type="pathway">
    <text evidence="1">Nitrogen metabolism; urea cycle; L-ornithine and urea from L-arginine: step 1/1.</text>
</comment>
<comment type="similarity">
    <text evidence="3">Belongs to the arginase family.</text>
</comment>
<feature type="chain" id="PRO_0000173718" description="Arginase">
    <location>
        <begin position="1"/>
        <end position="306"/>
    </location>
</feature>
<feature type="binding site" evidence="3">
    <location>
        <position position="96"/>
    </location>
    <ligand>
        <name>Mn(2+)</name>
        <dbReference type="ChEBI" id="CHEBI:29035"/>
        <label>1</label>
    </ligand>
</feature>
<feature type="binding site" evidence="3">
    <location>
        <position position="123"/>
    </location>
    <ligand>
        <name>Mn(2+)</name>
        <dbReference type="ChEBI" id="CHEBI:29035"/>
        <label>1</label>
    </ligand>
</feature>
<feature type="binding site" evidence="3">
    <location>
        <position position="123"/>
    </location>
    <ligand>
        <name>Mn(2+)</name>
        <dbReference type="ChEBI" id="CHEBI:29035"/>
        <label>2</label>
    </ligand>
</feature>
<feature type="binding site" evidence="2">
    <location>
        <begin position="125"/>
        <end position="129"/>
    </location>
    <ligand>
        <name>substrate</name>
    </ligand>
</feature>
<feature type="binding site" evidence="3">
    <location>
        <position position="125"/>
    </location>
    <ligand>
        <name>Mn(2+)</name>
        <dbReference type="ChEBI" id="CHEBI:29035"/>
        <label>2</label>
    </ligand>
</feature>
<feature type="binding site" evidence="3">
    <location>
        <position position="127"/>
    </location>
    <ligand>
        <name>Mn(2+)</name>
        <dbReference type="ChEBI" id="CHEBI:29035"/>
        <label>1</label>
    </ligand>
</feature>
<feature type="binding site" evidence="2">
    <location>
        <begin position="136"/>
        <end position="138"/>
    </location>
    <ligand>
        <name>substrate</name>
    </ligand>
</feature>
<feature type="binding site" evidence="2">
    <location>
        <position position="178"/>
    </location>
    <ligand>
        <name>substrate</name>
    </ligand>
</feature>
<feature type="binding site" evidence="3">
    <location>
        <position position="226"/>
    </location>
    <ligand>
        <name>Mn(2+)</name>
        <dbReference type="ChEBI" id="CHEBI:29035"/>
        <label>1</label>
    </ligand>
</feature>
<feature type="binding site" evidence="3">
    <location>
        <position position="226"/>
    </location>
    <ligand>
        <name>Mn(2+)</name>
        <dbReference type="ChEBI" id="CHEBI:29035"/>
        <label>2</label>
    </ligand>
</feature>
<feature type="binding site" evidence="3">
    <location>
        <position position="228"/>
    </location>
    <ligand>
        <name>Mn(2+)</name>
        <dbReference type="ChEBI" id="CHEBI:29035"/>
        <label>2</label>
    </ligand>
</feature>
<feature type="binding site" evidence="2">
    <location>
        <position position="240"/>
    </location>
    <ligand>
        <name>substrate</name>
    </ligand>
</feature>
<feature type="binding site" evidence="2">
    <location>
        <position position="271"/>
    </location>
    <ligand>
        <name>substrate</name>
    </ligand>
</feature>
<organism>
    <name type="scientific">Brucella suis biovar 1 (strain 1330)</name>
    <dbReference type="NCBI Taxonomy" id="204722"/>
    <lineage>
        <taxon>Bacteria</taxon>
        <taxon>Pseudomonadati</taxon>
        <taxon>Pseudomonadota</taxon>
        <taxon>Alphaproteobacteria</taxon>
        <taxon>Hyphomicrobiales</taxon>
        <taxon>Brucellaceae</taxon>
        <taxon>Brucella/Ochrobactrum group</taxon>
        <taxon>Brucella</taxon>
    </lineage>
</organism>
<reference key="1">
    <citation type="journal article" date="2002" name="Proc. Natl. Acad. Sci. U.S.A.">
        <title>The Brucella suis genome reveals fundamental similarities between animal and plant pathogens and symbionts.</title>
        <authorList>
            <person name="Paulsen I.T."/>
            <person name="Seshadri R."/>
            <person name="Nelson K.E."/>
            <person name="Eisen J.A."/>
            <person name="Heidelberg J.F."/>
            <person name="Read T.D."/>
            <person name="Dodson R.J."/>
            <person name="Umayam L.A."/>
            <person name="Brinkac L.M."/>
            <person name="Beanan M.J."/>
            <person name="Daugherty S.C."/>
            <person name="DeBoy R.T."/>
            <person name="Durkin A.S."/>
            <person name="Kolonay J.F."/>
            <person name="Madupu R."/>
            <person name="Nelson W.C."/>
            <person name="Ayodeji B."/>
            <person name="Kraul M."/>
            <person name="Shetty J."/>
            <person name="Malek J.A."/>
            <person name="Van Aken S.E."/>
            <person name="Riedmuller S."/>
            <person name="Tettelin H."/>
            <person name="Gill S.R."/>
            <person name="White O."/>
            <person name="Salzberg S.L."/>
            <person name="Hoover D.L."/>
            <person name="Lindler L.E."/>
            <person name="Halling S.M."/>
            <person name="Boyle S.M."/>
            <person name="Fraser C.M."/>
        </authorList>
    </citation>
    <scope>NUCLEOTIDE SEQUENCE [LARGE SCALE GENOMIC DNA]</scope>
    <source>
        <strain>1330</strain>
    </source>
</reference>
<reference key="2">
    <citation type="journal article" date="2011" name="J. Bacteriol.">
        <title>Revised genome sequence of Brucella suis 1330.</title>
        <authorList>
            <person name="Tae H."/>
            <person name="Shallom S."/>
            <person name="Settlage R."/>
            <person name="Preston D."/>
            <person name="Adams L.G."/>
            <person name="Garner H.R."/>
        </authorList>
    </citation>
    <scope>NUCLEOTIDE SEQUENCE [LARGE SCALE GENOMIC DNA]</scope>
    <source>
        <strain>1330</strain>
    </source>
</reference>